<name>TRMD_LACDA</name>
<evidence type="ECO:0000255" key="1">
    <source>
        <dbReference type="HAMAP-Rule" id="MF_00605"/>
    </source>
</evidence>
<organism>
    <name type="scientific">Lactobacillus delbrueckii subsp. bulgaricus (strain ATCC 11842 / DSM 20081 / BCRC 10696 / JCM 1002 / NBRC 13953 / NCIMB 11778 / NCTC 12712 / WDCM 00102 / Lb 14)</name>
    <dbReference type="NCBI Taxonomy" id="390333"/>
    <lineage>
        <taxon>Bacteria</taxon>
        <taxon>Bacillati</taxon>
        <taxon>Bacillota</taxon>
        <taxon>Bacilli</taxon>
        <taxon>Lactobacillales</taxon>
        <taxon>Lactobacillaceae</taxon>
        <taxon>Lactobacillus</taxon>
    </lineage>
</organism>
<proteinExistence type="inferred from homology"/>
<dbReference type="EC" id="2.1.1.228" evidence="1"/>
<dbReference type="EMBL" id="CR954253">
    <property type="protein sequence ID" value="CAI98170.1"/>
    <property type="molecule type" value="Genomic_DNA"/>
</dbReference>
<dbReference type="RefSeq" id="WP_004560797.1">
    <property type="nucleotide sequence ID" value="NZ_JQAV01000006.1"/>
</dbReference>
<dbReference type="SMR" id="Q1G9L4"/>
<dbReference type="STRING" id="390333.Ldb1369"/>
<dbReference type="KEGG" id="ldb:Ldb1369"/>
<dbReference type="PATRIC" id="fig|390333.13.peg.1736"/>
<dbReference type="eggNOG" id="COG0336">
    <property type="taxonomic scope" value="Bacteria"/>
</dbReference>
<dbReference type="HOGENOM" id="CLU_047363_0_1_9"/>
<dbReference type="BioCyc" id="LDEL390333:LDB_RS05875-MONOMER"/>
<dbReference type="Proteomes" id="UP000001259">
    <property type="component" value="Chromosome"/>
</dbReference>
<dbReference type="GO" id="GO:0005829">
    <property type="term" value="C:cytosol"/>
    <property type="evidence" value="ECO:0007669"/>
    <property type="project" value="TreeGrafter"/>
</dbReference>
<dbReference type="GO" id="GO:0052906">
    <property type="term" value="F:tRNA (guanine(37)-N1)-methyltransferase activity"/>
    <property type="evidence" value="ECO:0007669"/>
    <property type="project" value="UniProtKB-UniRule"/>
</dbReference>
<dbReference type="GO" id="GO:0002939">
    <property type="term" value="P:tRNA N1-guanine methylation"/>
    <property type="evidence" value="ECO:0007669"/>
    <property type="project" value="TreeGrafter"/>
</dbReference>
<dbReference type="CDD" id="cd18080">
    <property type="entry name" value="TrmD-like"/>
    <property type="match status" value="1"/>
</dbReference>
<dbReference type="FunFam" id="1.10.1270.20:FF:000001">
    <property type="entry name" value="tRNA (guanine-N(1)-)-methyltransferase"/>
    <property type="match status" value="1"/>
</dbReference>
<dbReference type="FunFam" id="3.40.1280.10:FF:000001">
    <property type="entry name" value="tRNA (guanine-N(1)-)-methyltransferase"/>
    <property type="match status" value="1"/>
</dbReference>
<dbReference type="Gene3D" id="3.40.1280.10">
    <property type="match status" value="1"/>
</dbReference>
<dbReference type="Gene3D" id="1.10.1270.20">
    <property type="entry name" value="tRNA(m1g37)methyltransferase, domain 2"/>
    <property type="match status" value="1"/>
</dbReference>
<dbReference type="HAMAP" id="MF_00605">
    <property type="entry name" value="TrmD"/>
    <property type="match status" value="1"/>
</dbReference>
<dbReference type="InterPro" id="IPR029028">
    <property type="entry name" value="Alpha/beta_knot_MTases"/>
</dbReference>
<dbReference type="InterPro" id="IPR023148">
    <property type="entry name" value="tRNA_m1G_MeTrfase_C_sf"/>
</dbReference>
<dbReference type="InterPro" id="IPR002649">
    <property type="entry name" value="tRNA_m1G_MeTrfase_TrmD"/>
</dbReference>
<dbReference type="InterPro" id="IPR029026">
    <property type="entry name" value="tRNA_m1G_MTases_N"/>
</dbReference>
<dbReference type="InterPro" id="IPR016009">
    <property type="entry name" value="tRNA_MeTrfase_TRMD/TRM10"/>
</dbReference>
<dbReference type="NCBIfam" id="NF000648">
    <property type="entry name" value="PRK00026.1"/>
    <property type="match status" value="1"/>
</dbReference>
<dbReference type="NCBIfam" id="TIGR00088">
    <property type="entry name" value="trmD"/>
    <property type="match status" value="1"/>
</dbReference>
<dbReference type="PANTHER" id="PTHR46417">
    <property type="entry name" value="TRNA (GUANINE-N(1)-)-METHYLTRANSFERASE"/>
    <property type="match status" value="1"/>
</dbReference>
<dbReference type="PANTHER" id="PTHR46417:SF1">
    <property type="entry name" value="TRNA (GUANINE-N(1)-)-METHYLTRANSFERASE"/>
    <property type="match status" value="1"/>
</dbReference>
<dbReference type="Pfam" id="PF01746">
    <property type="entry name" value="tRNA_m1G_MT"/>
    <property type="match status" value="1"/>
</dbReference>
<dbReference type="PIRSF" id="PIRSF000386">
    <property type="entry name" value="tRNA_mtase"/>
    <property type="match status" value="1"/>
</dbReference>
<dbReference type="SUPFAM" id="SSF75217">
    <property type="entry name" value="alpha/beta knot"/>
    <property type="match status" value="1"/>
</dbReference>
<protein>
    <recommendedName>
        <fullName evidence="1">tRNA (guanine-N(1)-)-methyltransferase</fullName>
        <ecNumber evidence="1">2.1.1.228</ecNumber>
    </recommendedName>
    <alternativeName>
        <fullName evidence="1">M1G-methyltransferase</fullName>
    </alternativeName>
    <alternativeName>
        <fullName evidence="1">tRNA [GM37] methyltransferase</fullName>
    </alternativeName>
</protein>
<accession>Q1G9L4</accession>
<keyword id="KW-0963">Cytoplasm</keyword>
<keyword id="KW-0489">Methyltransferase</keyword>
<keyword id="KW-1185">Reference proteome</keyword>
<keyword id="KW-0949">S-adenosyl-L-methionine</keyword>
<keyword id="KW-0808">Transferase</keyword>
<keyword id="KW-0819">tRNA processing</keyword>
<feature type="chain" id="PRO_0000257426" description="tRNA (guanine-N(1)-)-methyltransferase">
    <location>
        <begin position="1"/>
        <end position="245"/>
    </location>
</feature>
<feature type="binding site" evidence="1">
    <location>
        <position position="108"/>
    </location>
    <ligand>
        <name>S-adenosyl-L-methionine</name>
        <dbReference type="ChEBI" id="CHEBI:59789"/>
    </ligand>
</feature>
<feature type="binding site" evidence="1">
    <location>
        <begin position="127"/>
        <end position="132"/>
    </location>
    <ligand>
        <name>S-adenosyl-L-methionine</name>
        <dbReference type="ChEBI" id="CHEBI:59789"/>
    </ligand>
</feature>
<comment type="function">
    <text evidence="1">Specifically methylates guanosine-37 in various tRNAs.</text>
</comment>
<comment type="catalytic activity">
    <reaction evidence="1">
        <text>guanosine(37) in tRNA + S-adenosyl-L-methionine = N(1)-methylguanosine(37) in tRNA + S-adenosyl-L-homocysteine + H(+)</text>
        <dbReference type="Rhea" id="RHEA:36899"/>
        <dbReference type="Rhea" id="RHEA-COMP:10145"/>
        <dbReference type="Rhea" id="RHEA-COMP:10147"/>
        <dbReference type="ChEBI" id="CHEBI:15378"/>
        <dbReference type="ChEBI" id="CHEBI:57856"/>
        <dbReference type="ChEBI" id="CHEBI:59789"/>
        <dbReference type="ChEBI" id="CHEBI:73542"/>
        <dbReference type="ChEBI" id="CHEBI:74269"/>
        <dbReference type="EC" id="2.1.1.228"/>
    </reaction>
</comment>
<comment type="subunit">
    <text evidence="1">Homodimer.</text>
</comment>
<comment type="subcellular location">
    <subcellularLocation>
        <location evidence="1">Cytoplasm</location>
    </subcellularLocation>
</comment>
<comment type="similarity">
    <text evidence="1">Belongs to the RNA methyltransferase TrmD family.</text>
</comment>
<gene>
    <name evidence="1" type="primary">trmD</name>
    <name type="ordered locus">Ldb1369</name>
</gene>
<sequence length="245" mass="27741">MNINVLTLFPEMFTPLQVSLLGRGQEDGKWKLNLVNFRDFSDRPHKSVDDTPYGGGAGMVLQVKPIKDALDSLENKGKVIITAPQGKTFNEQMAQEWSKEENLTFICGHFEGFDQRVYDLADEMVSIGDYVLTGGELPTMSMIDATVRLLPGILGNALSTVEESFSDGLLEYPQYTRPADFEGQKVPEVLLSGNHGKIDEWRHYQALKATKLHRPDLLEKRDLTPEEVRMLRQIREDEQAEEDKL</sequence>
<reference key="1">
    <citation type="journal article" date="2006" name="Proc. Natl. Acad. Sci. U.S.A.">
        <title>The complete genome sequence of Lactobacillus bulgaricus reveals extensive and ongoing reductive evolution.</title>
        <authorList>
            <person name="van de Guchte M."/>
            <person name="Penaud S."/>
            <person name="Grimaldi C."/>
            <person name="Barbe V."/>
            <person name="Bryson K."/>
            <person name="Nicolas P."/>
            <person name="Robert C."/>
            <person name="Oztas S."/>
            <person name="Mangenot S."/>
            <person name="Couloux A."/>
            <person name="Loux V."/>
            <person name="Dervyn R."/>
            <person name="Bossy R."/>
            <person name="Bolotin A."/>
            <person name="Batto J.-M."/>
            <person name="Walunas T."/>
            <person name="Gibrat J.-F."/>
            <person name="Bessieres P."/>
            <person name="Weissenbach J."/>
            <person name="Ehrlich S.D."/>
            <person name="Maguin E."/>
        </authorList>
    </citation>
    <scope>NUCLEOTIDE SEQUENCE [LARGE SCALE GENOMIC DNA]</scope>
    <source>
        <strain>ATCC 11842 / DSM 20081 / BCRC 10696 / JCM 1002 / NBRC 13953 / NCIMB 11778 / NCTC 12712 / WDCM 00102 / Lb 14</strain>
    </source>
</reference>